<evidence type="ECO:0000255" key="1">
    <source>
        <dbReference type="HAMAP-Rule" id="MF_00238"/>
    </source>
</evidence>
<proteinExistence type="inferred from homology"/>
<sequence length="217" mass="24444">MLDISIAIDGPAGAGKSTIAKIIGNKLNIMYINTGSMYRAVTLMALKNNIEPYDIESLKALINSMNISFNGNNIIVNGKDLEEDIRMPIINNNVSKYAAVEEVRELLVSMQQNISKKYNVVMDGRDIGTVVLKDAPYKFFITASAEVRAKRRLKELKEKGININFRDVLKEIKERDYIDSNRKVNPLKQSKDAILIDTSNFTIEEVVDKICTIIKKD</sequence>
<reference key="1">
    <citation type="submission" date="2008-10" db="EMBL/GenBank/DDBJ databases">
        <title>Genome sequence of Clostridium botulinum A2 Kyoto.</title>
        <authorList>
            <person name="Shrivastava S."/>
            <person name="Brinkac L.M."/>
            <person name="Brown J.L."/>
            <person name="Bruce D."/>
            <person name="Detter C.C."/>
            <person name="Johnson E.A."/>
            <person name="Munk C.A."/>
            <person name="Smith L.A."/>
            <person name="Smith T.J."/>
            <person name="Sutton G."/>
            <person name="Brettin T.S."/>
        </authorList>
    </citation>
    <scope>NUCLEOTIDE SEQUENCE [LARGE SCALE GENOMIC DNA]</scope>
    <source>
        <strain>Kyoto / Type A2</strain>
    </source>
</reference>
<organism>
    <name type="scientific">Clostridium botulinum (strain Kyoto / Type A2)</name>
    <dbReference type="NCBI Taxonomy" id="536232"/>
    <lineage>
        <taxon>Bacteria</taxon>
        <taxon>Bacillati</taxon>
        <taxon>Bacillota</taxon>
        <taxon>Clostridia</taxon>
        <taxon>Eubacteriales</taxon>
        <taxon>Clostridiaceae</taxon>
        <taxon>Clostridium</taxon>
    </lineage>
</organism>
<protein>
    <recommendedName>
        <fullName evidence="1">Cytidylate kinase</fullName>
        <shortName evidence="1">CK</shortName>
        <ecNumber evidence="1">2.7.4.25</ecNumber>
    </recommendedName>
    <alternativeName>
        <fullName evidence="1">Cytidine monophosphate kinase</fullName>
        <shortName evidence="1">CMP kinase</shortName>
    </alternativeName>
</protein>
<dbReference type="EC" id="2.7.4.25" evidence="1"/>
<dbReference type="EMBL" id="CP001581">
    <property type="protein sequence ID" value="ACO85346.1"/>
    <property type="molecule type" value="Genomic_DNA"/>
</dbReference>
<dbReference type="RefSeq" id="WP_003358949.1">
    <property type="nucleotide sequence ID" value="NC_012563.1"/>
</dbReference>
<dbReference type="SMR" id="C1FNU7"/>
<dbReference type="GeneID" id="5186063"/>
<dbReference type="KEGG" id="cby:CLM_1965"/>
<dbReference type="eggNOG" id="COG0283">
    <property type="taxonomic scope" value="Bacteria"/>
</dbReference>
<dbReference type="HOGENOM" id="CLU_079959_0_2_9"/>
<dbReference type="Proteomes" id="UP000001374">
    <property type="component" value="Chromosome"/>
</dbReference>
<dbReference type="GO" id="GO:0005829">
    <property type="term" value="C:cytosol"/>
    <property type="evidence" value="ECO:0007669"/>
    <property type="project" value="TreeGrafter"/>
</dbReference>
<dbReference type="GO" id="GO:0005524">
    <property type="term" value="F:ATP binding"/>
    <property type="evidence" value="ECO:0007669"/>
    <property type="project" value="UniProtKB-UniRule"/>
</dbReference>
<dbReference type="GO" id="GO:0036430">
    <property type="term" value="F:CMP kinase activity"/>
    <property type="evidence" value="ECO:0007669"/>
    <property type="project" value="RHEA"/>
</dbReference>
<dbReference type="GO" id="GO:0036431">
    <property type="term" value="F:dCMP kinase activity"/>
    <property type="evidence" value="ECO:0007669"/>
    <property type="project" value="RHEA"/>
</dbReference>
<dbReference type="GO" id="GO:0015949">
    <property type="term" value="P:nucleobase-containing small molecule interconversion"/>
    <property type="evidence" value="ECO:0007669"/>
    <property type="project" value="TreeGrafter"/>
</dbReference>
<dbReference type="GO" id="GO:0006220">
    <property type="term" value="P:pyrimidine nucleotide metabolic process"/>
    <property type="evidence" value="ECO:0007669"/>
    <property type="project" value="UniProtKB-UniRule"/>
</dbReference>
<dbReference type="CDD" id="cd02020">
    <property type="entry name" value="CMPK"/>
    <property type="match status" value="1"/>
</dbReference>
<dbReference type="FunFam" id="3.40.50.300:FF:002511">
    <property type="entry name" value="Cytidylate kinase"/>
    <property type="match status" value="1"/>
</dbReference>
<dbReference type="Gene3D" id="3.40.50.300">
    <property type="entry name" value="P-loop containing nucleotide triphosphate hydrolases"/>
    <property type="match status" value="1"/>
</dbReference>
<dbReference type="HAMAP" id="MF_00238">
    <property type="entry name" value="Cytidyl_kinase_type1"/>
    <property type="match status" value="1"/>
</dbReference>
<dbReference type="InterPro" id="IPR003136">
    <property type="entry name" value="Cytidylate_kin"/>
</dbReference>
<dbReference type="InterPro" id="IPR011994">
    <property type="entry name" value="Cytidylate_kinase_dom"/>
</dbReference>
<dbReference type="InterPro" id="IPR027417">
    <property type="entry name" value="P-loop_NTPase"/>
</dbReference>
<dbReference type="NCBIfam" id="TIGR00017">
    <property type="entry name" value="cmk"/>
    <property type="match status" value="1"/>
</dbReference>
<dbReference type="PANTHER" id="PTHR21299:SF2">
    <property type="entry name" value="CYTIDYLATE KINASE"/>
    <property type="match status" value="1"/>
</dbReference>
<dbReference type="PANTHER" id="PTHR21299">
    <property type="entry name" value="CYTIDYLATE KINASE/PANTOATE-BETA-ALANINE LIGASE"/>
    <property type="match status" value="1"/>
</dbReference>
<dbReference type="Pfam" id="PF02224">
    <property type="entry name" value="Cytidylate_kin"/>
    <property type="match status" value="1"/>
</dbReference>
<dbReference type="SUPFAM" id="SSF52540">
    <property type="entry name" value="P-loop containing nucleoside triphosphate hydrolases"/>
    <property type="match status" value="1"/>
</dbReference>
<feature type="chain" id="PRO_1000125280" description="Cytidylate kinase">
    <location>
        <begin position="1"/>
        <end position="217"/>
    </location>
</feature>
<feature type="binding site" evidence="1">
    <location>
        <begin position="10"/>
        <end position="18"/>
    </location>
    <ligand>
        <name>ATP</name>
        <dbReference type="ChEBI" id="CHEBI:30616"/>
    </ligand>
</feature>
<comment type="catalytic activity">
    <reaction evidence="1">
        <text>CMP + ATP = CDP + ADP</text>
        <dbReference type="Rhea" id="RHEA:11600"/>
        <dbReference type="ChEBI" id="CHEBI:30616"/>
        <dbReference type="ChEBI" id="CHEBI:58069"/>
        <dbReference type="ChEBI" id="CHEBI:60377"/>
        <dbReference type="ChEBI" id="CHEBI:456216"/>
        <dbReference type="EC" id="2.7.4.25"/>
    </reaction>
</comment>
<comment type="catalytic activity">
    <reaction evidence="1">
        <text>dCMP + ATP = dCDP + ADP</text>
        <dbReference type="Rhea" id="RHEA:25094"/>
        <dbReference type="ChEBI" id="CHEBI:30616"/>
        <dbReference type="ChEBI" id="CHEBI:57566"/>
        <dbReference type="ChEBI" id="CHEBI:58593"/>
        <dbReference type="ChEBI" id="CHEBI:456216"/>
        <dbReference type="EC" id="2.7.4.25"/>
    </reaction>
</comment>
<comment type="subcellular location">
    <subcellularLocation>
        <location evidence="1">Cytoplasm</location>
    </subcellularLocation>
</comment>
<comment type="similarity">
    <text evidence="1">Belongs to the cytidylate kinase family. Type 1 subfamily.</text>
</comment>
<name>KCY_CLOBJ</name>
<accession>C1FNU7</accession>
<gene>
    <name evidence="1" type="primary">cmk</name>
    <name type="ordered locus">CLM_1965</name>
</gene>
<keyword id="KW-0067">ATP-binding</keyword>
<keyword id="KW-0963">Cytoplasm</keyword>
<keyword id="KW-0418">Kinase</keyword>
<keyword id="KW-0547">Nucleotide-binding</keyword>
<keyword id="KW-0808">Transferase</keyword>